<reference key="1">
    <citation type="journal article" date="2005" name="Nat. Biotechnol.">
        <title>Complete genome sequence of the acetic acid bacterium Gluconobacter oxydans.</title>
        <authorList>
            <person name="Prust C."/>
            <person name="Hoffmeister M."/>
            <person name="Liesegang H."/>
            <person name="Wiezer A."/>
            <person name="Fricke W.F."/>
            <person name="Ehrenreich A."/>
            <person name="Gottschalk G."/>
            <person name="Deppenmeier U."/>
        </authorList>
    </citation>
    <scope>NUCLEOTIDE SEQUENCE [LARGE SCALE GENOMIC DNA]</scope>
    <source>
        <strain>621H</strain>
    </source>
</reference>
<comment type="function">
    <text evidence="1">Catalyzes the phosphorylation of pantothenate (Pan), the first step in CoA biosynthesis.</text>
</comment>
<comment type="catalytic activity">
    <reaction evidence="1">
        <text>(R)-pantothenate + ATP = (R)-4'-phosphopantothenate + ADP + H(+)</text>
        <dbReference type="Rhea" id="RHEA:16373"/>
        <dbReference type="ChEBI" id="CHEBI:10986"/>
        <dbReference type="ChEBI" id="CHEBI:15378"/>
        <dbReference type="ChEBI" id="CHEBI:29032"/>
        <dbReference type="ChEBI" id="CHEBI:30616"/>
        <dbReference type="ChEBI" id="CHEBI:456216"/>
        <dbReference type="EC" id="2.7.1.33"/>
    </reaction>
</comment>
<comment type="cofactor">
    <cofactor evidence="1">
        <name>NH4(+)</name>
        <dbReference type="ChEBI" id="CHEBI:28938"/>
    </cofactor>
    <cofactor evidence="1">
        <name>K(+)</name>
        <dbReference type="ChEBI" id="CHEBI:29103"/>
    </cofactor>
    <text evidence="1">A monovalent cation. Ammonium or potassium.</text>
</comment>
<comment type="pathway">
    <text evidence="1">Cofactor biosynthesis; coenzyme A biosynthesis; CoA from (R)-pantothenate: step 1/5.</text>
</comment>
<comment type="subunit">
    <text evidence="1">Homodimer.</text>
</comment>
<comment type="subcellular location">
    <subcellularLocation>
        <location evidence="1">Cytoplasm</location>
    </subcellularLocation>
</comment>
<comment type="similarity">
    <text evidence="1">Belongs to the type III pantothenate kinase family.</text>
</comment>
<proteinExistence type="inferred from homology"/>
<evidence type="ECO:0000255" key="1">
    <source>
        <dbReference type="HAMAP-Rule" id="MF_01274"/>
    </source>
</evidence>
<accession>Q5FUV0</accession>
<feature type="chain" id="PRO_0000267542" description="Type III pantothenate kinase">
    <location>
        <begin position="1"/>
        <end position="270"/>
    </location>
</feature>
<feature type="active site" description="Proton acceptor" evidence="1">
    <location>
        <position position="109"/>
    </location>
</feature>
<feature type="binding site" evidence="1">
    <location>
        <begin position="6"/>
        <end position="13"/>
    </location>
    <ligand>
        <name>ATP</name>
        <dbReference type="ChEBI" id="CHEBI:30616"/>
    </ligand>
</feature>
<feature type="binding site" evidence="1">
    <location>
        <begin position="107"/>
        <end position="110"/>
    </location>
    <ligand>
        <name>substrate</name>
    </ligand>
</feature>
<feature type="binding site" evidence="1">
    <location>
        <position position="129"/>
    </location>
    <ligand>
        <name>K(+)</name>
        <dbReference type="ChEBI" id="CHEBI:29103"/>
    </ligand>
</feature>
<feature type="binding site" evidence="1">
    <location>
        <position position="132"/>
    </location>
    <ligand>
        <name>ATP</name>
        <dbReference type="ChEBI" id="CHEBI:30616"/>
    </ligand>
</feature>
<feature type="binding site" evidence="1">
    <location>
        <position position="184"/>
    </location>
    <ligand>
        <name>substrate</name>
    </ligand>
</feature>
<name>COAX_GLUOX</name>
<keyword id="KW-0067">ATP-binding</keyword>
<keyword id="KW-0173">Coenzyme A biosynthesis</keyword>
<keyword id="KW-0963">Cytoplasm</keyword>
<keyword id="KW-0418">Kinase</keyword>
<keyword id="KW-0479">Metal-binding</keyword>
<keyword id="KW-0547">Nucleotide-binding</keyword>
<keyword id="KW-0630">Potassium</keyword>
<keyword id="KW-1185">Reference proteome</keyword>
<keyword id="KW-0808">Transferase</keyword>
<dbReference type="EC" id="2.7.1.33" evidence="1"/>
<dbReference type="EMBL" id="CP000009">
    <property type="protein sequence ID" value="AAW59878.1"/>
    <property type="molecule type" value="Genomic_DNA"/>
</dbReference>
<dbReference type="RefSeq" id="WP_011251682.1">
    <property type="nucleotide sequence ID" value="NZ_LT900338.1"/>
</dbReference>
<dbReference type="SMR" id="Q5FUV0"/>
<dbReference type="STRING" id="290633.GOX0081"/>
<dbReference type="KEGG" id="gox:GOX0081"/>
<dbReference type="eggNOG" id="COG1521">
    <property type="taxonomic scope" value="Bacteria"/>
</dbReference>
<dbReference type="HOGENOM" id="CLU_066627_1_0_5"/>
<dbReference type="UniPathway" id="UPA00241">
    <property type="reaction ID" value="UER00352"/>
</dbReference>
<dbReference type="Proteomes" id="UP000006375">
    <property type="component" value="Chromosome"/>
</dbReference>
<dbReference type="GO" id="GO:0005737">
    <property type="term" value="C:cytoplasm"/>
    <property type="evidence" value="ECO:0007669"/>
    <property type="project" value="UniProtKB-SubCell"/>
</dbReference>
<dbReference type="GO" id="GO:0005524">
    <property type="term" value="F:ATP binding"/>
    <property type="evidence" value="ECO:0007669"/>
    <property type="project" value="UniProtKB-UniRule"/>
</dbReference>
<dbReference type="GO" id="GO:0046872">
    <property type="term" value="F:metal ion binding"/>
    <property type="evidence" value="ECO:0007669"/>
    <property type="project" value="UniProtKB-KW"/>
</dbReference>
<dbReference type="GO" id="GO:0004594">
    <property type="term" value="F:pantothenate kinase activity"/>
    <property type="evidence" value="ECO:0007669"/>
    <property type="project" value="UniProtKB-UniRule"/>
</dbReference>
<dbReference type="GO" id="GO:0015937">
    <property type="term" value="P:coenzyme A biosynthetic process"/>
    <property type="evidence" value="ECO:0007669"/>
    <property type="project" value="UniProtKB-UniRule"/>
</dbReference>
<dbReference type="CDD" id="cd24015">
    <property type="entry name" value="ASKHA_NBD_PanK-III"/>
    <property type="match status" value="1"/>
</dbReference>
<dbReference type="Gene3D" id="3.30.420.40">
    <property type="match status" value="2"/>
</dbReference>
<dbReference type="HAMAP" id="MF_01274">
    <property type="entry name" value="Pantothen_kinase_3"/>
    <property type="match status" value="1"/>
</dbReference>
<dbReference type="InterPro" id="IPR043129">
    <property type="entry name" value="ATPase_NBD"/>
</dbReference>
<dbReference type="InterPro" id="IPR004619">
    <property type="entry name" value="Type_III_PanK"/>
</dbReference>
<dbReference type="NCBIfam" id="TIGR00671">
    <property type="entry name" value="baf"/>
    <property type="match status" value="1"/>
</dbReference>
<dbReference type="NCBIfam" id="NF009844">
    <property type="entry name" value="PRK13318.1-2"/>
    <property type="match status" value="1"/>
</dbReference>
<dbReference type="NCBIfam" id="NF009855">
    <property type="entry name" value="PRK13321.1"/>
    <property type="match status" value="1"/>
</dbReference>
<dbReference type="PANTHER" id="PTHR34265">
    <property type="entry name" value="TYPE III PANTOTHENATE KINASE"/>
    <property type="match status" value="1"/>
</dbReference>
<dbReference type="PANTHER" id="PTHR34265:SF1">
    <property type="entry name" value="TYPE III PANTOTHENATE KINASE"/>
    <property type="match status" value="1"/>
</dbReference>
<dbReference type="Pfam" id="PF03309">
    <property type="entry name" value="Pan_kinase"/>
    <property type="match status" value="1"/>
</dbReference>
<dbReference type="SUPFAM" id="SSF53067">
    <property type="entry name" value="Actin-like ATPase domain"/>
    <property type="match status" value="2"/>
</dbReference>
<sequence>MLLVIDAGNTNIVFAVHDGESWLGQWRISTNEARTADEYAAWLLTLFDRVGVNAKAITRAIIGTVVPVALYELRRFCREWLDVVPLVANARLDWGIDVLVDNPNELGADRRLNGLAGRELFGAPLIVVDFGTATTFDVVNSAGQFCGGAIAPGVNLSIDALHRAAARLPRMSIGRPTAAIGRNTSVAMRSGLFWGYVGLVEGLIHRISDEMDAKPTVIATGGLAPLFSEGTPLFDVLAPDLTLDGLRLLADRNTGPPLSYSPERSQGIGQ</sequence>
<gene>
    <name evidence="1" type="primary">coaX</name>
    <name type="ordered locus">GOX0081</name>
</gene>
<organism>
    <name type="scientific">Gluconobacter oxydans (strain 621H)</name>
    <name type="common">Gluconobacter suboxydans</name>
    <dbReference type="NCBI Taxonomy" id="290633"/>
    <lineage>
        <taxon>Bacteria</taxon>
        <taxon>Pseudomonadati</taxon>
        <taxon>Pseudomonadota</taxon>
        <taxon>Alphaproteobacteria</taxon>
        <taxon>Acetobacterales</taxon>
        <taxon>Acetobacteraceae</taxon>
        <taxon>Gluconobacter</taxon>
    </lineage>
</organism>
<protein>
    <recommendedName>
        <fullName evidence="1">Type III pantothenate kinase</fullName>
        <ecNumber evidence="1">2.7.1.33</ecNumber>
    </recommendedName>
    <alternativeName>
        <fullName evidence="1">PanK-III</fullName>
    </alternativeName>
    <alternativeName>
        <fullName evidence="1">Pantothenic acid kinase</fullName>
    </alternativeName>
</protein>